<comment type="function">
    <text evidence="1 5 6 11 13 15">Transcription factor that is involved in the regulation of cell proliferation, apoptosis and embryonic development (By similarity). Plays an important role in the development of several organs, including kidney, muscle and inner ear (By similarity). Depending on context, functions as a transcriptional repressor or activator (By similarity). Lacks an activation domain, and requires interaction with EYA family members for transcription activation (PubMed:15141091). Mediates nuclear translocation of EYA1 and EYA2 (PubMed:19497856). Binds the 5'-TCA[AG][AG]TTNC-3' motif present in the MEF3 element in the MYOG promoter and CIDEA enhancer (PubMed:15141091, PubMed:19497856, PubMed:23435380, PubMed:27923061). Regulates the expression of numerous genes, including MYC, CCND1 and EZR (By similarity). Acts as an activator of the IGFBP5 promoter, probably coactivated by EYA2 (By similarity). Repression of precursor cell proliferation in myoblasts is switched to activation through recruitment of EYA3 to the SIX1-DACH1 complex (By similarity). During myogenesis, seems to act together with EYA2 and DACH2 (By similarity). Regulates the expression of CCNA1 (PubMed:15123840). Promotes brown adipocyte differentiation (By similarity).</text>
</comment>
<comment type="subunit">
    <text evidence="1 8 11 13 14 15">Interacts with DACH1 (By similarity). Interacts with EYA1 (By similarity). Interacts with EYA2 (PubMed:19497856, PubMed:23435380). Interacts with CDH1 (PubMed:17130831). Interacts with TBX18 (PubMed:26235987). Interacts with CEBPA (PubMed:27923061). Interacts with CEBPB (PubMed:27923061). Interacts with EBF2 (PubMed:27923061).</text>
</comment>
<comment type="interaction">
    <interactant intactId="EBI-743675">
        <id>Q15475</id>
    </interactant>
    <interactant intactId="EBI-12244764">
        <id>Q99502</id>
        <label>EYA1</label>
    </interactant>
    <organismsDiffer>false</organismsDiffer>
    <experiments>5</experiments>
</comment>
<comment type="interaction">
    <interactant intactId="EBI-743675">
        <id>Q15475</id>
    </interactant>
    <interactant intactId="EBI-750211">
        <id>O00167</id>
        <label>EYA2</label>
    </interactant>
    <organismsDiffer>false</organismsDiffer>
    <experiments>4</experiments>
</comment>
<comment type="interaction">
    <interactant intactId="EBI-743675">
        <id>Q15475</id>
    </interactant>
    <interactant intactId="EBI-16038245">
        <id>O00167-1</id>
        <label>EYA2</label>
    </interactant>
    <organismsDiffer>false</organismsDiffer>
    <experiments>3</experiments>
</comment>
<comment type="interaction">
    <interactant intactId="EBI-743675">
        <id>Q15475</id>
    </interactant>
    <interactant intactId="EBI-12807776">
        <id>O00167-2</id>
        <label>EYA2</label>
    </interactant>
    <organismsDiffer>false</organismsDiffer>
    <experiments>3</experiments>
</comment>
<comment type="interaction">
    <interactant intactId="EBI-743675">
        <id>Q15475</id>
    </interactant>
    <interactant intactId="EBI-6447217">
        <id>O75409</id>
        <label>H2AP</label>
    </interactant>
    <organismsDiffer>false</organismsDiffer>
    <experiments>4</experiments>
</comment>
<comment type="interaction">
    <interactant intactId="EBI-743675">
        <id>Q15475</id>
    </interactant>
    <interactant intactId="EBI-724076">
        <id>Q99750</id>
        <label>MDFI</label>
    </interactant>
    <organismsDiffer>false</organismsDiffer>
    <experiments>2</experiments>
</comment>
<comment type="interaction">
    <interactant intactId="EBI-743675">
        <id>Q15475</id>
    </interactant>
    <interactant intactId="EBI-949255">
        <id>Q58EX7</id>
        <label>PLEKHG4</label>
    </interactant>
    <organismsDiffer>false</organismsDiffer>
    <experiments>3</experiments>
</comment>
<comment type="interaction">
    <interactant intactId="EBI-743675">
        <id>Q15475</id>
    </interactant>
    <interactant intactId="EBI-12029004">
        <id>P78424</id>
        <label>POU6F2</label>
    </interactant>
    <organismsDiffer>false</organismsDiffer>
    <experiments>3</experiments>
</comment>
<comment type="interaction">
    <interactant intactId="EBI-743675">
        <id>Q15475</id>
    </interactant>
    <interactant intactId="EBI-10829018">
        <id>Q04864-2</id>
        <label>REL</label>
    </interactant>
    <organismsDiffer>false</organismsDiffer>
    <experiments>3</experiments>
</comment>
<comment type="interaction">
    <interactant intactId="EBI-743675">
        <id>Q15475</id>
    </interactant>
    <interactant intactId="EBI-12014388">
        <id>Q04726-4</id>
        <label>TLE3</label>
    </interactant>
    <organismsDiffer>false</organismsDiffer>
    <experiments>3</experiments>
</comment>
<comment type="interaction">
    <interactant intactId="EBI-743675">
        <id>Q15475</id>
    </interactant>
    <interactant intactId="EBI-717810">
        <id>Q08117</id>
        <label>TLE5</label>
    </interactant>
    <organismsDiffer>false</organismsDiffer>
    <experiments>3</experiments>
</comment>
<comment type="interaction">
    <interactant intactId="EBI-743675">
        <id>Q15475</id>
    </interactant>
    <interactant intactId="EBI-11741437">
        <id>Q08117-2</id>
        <label>TLE5</label>
    </interactant>
    <organismsDiffer>false</organismsDiffer>
    <experiments>6</experiments>
</comment>
<comment type="subcellular location">
    <subcellularLocation>
        <location evidence="4 8 11">Nucleus</location>
    </subcellularLocation>
    <subcellularLocation>
        <location>Cytoplasm</location>
    </subcellularLocation>
</comment>
<comment type="tissue specificity">
    <text>Specifically expressed in skeletal muscle.</text>
</comment>
<comment type="PTM">
    <text evidence="4">Phosphorylated during interphase; becomes hyperphosphorylated during mitosis. Hyperphosphorylation impairs binding to promoter elements.</text>
</comment>
<comment type="PTM">
    <text evidence="8">Ubiquitinated by the anaphase promoting complex (APC), leading to its proteasomal degradation.</text>
</comment>
<comment type="disease" evidence="6 11 13">
    <disease id="DI-01205">
        <name>Deafness, autosomal dominant, 23</name>
        <acronym>DFNA23</acronym>
        <description>A form of non-syndromic deafness characterized by prelingual, bilateral, symmetric hearing loss with a conductive component present in some but not all patients.</description>
        <dbReference type="MIM" id="605192"/>
    </disease>
    <text>The disease is caused by variants affecting the gene represented in this entry.</text>
</comment>
<comment type="disease" evidence="6 9 10 11 12 13">
    <disease id="DI-01296">
        <name>Branchiootic syndrome 3</name>
        <acronym>BOS3</acronym>
        <description>A syndrome characterized by usually bilateral branchial cleft fistulas or cysts, sensorineural and/or conductive hearing loss, pre-auricular pits, and structural defects of the outer, middle or inner ear. Otic defects include malformed and hypoplastic pinnae, a narrowed external ear canal, bulbous internal auditory canal, stapes fixation, malformed and hypoplastic cochlea. Branchial and otic anomalies overlap with those seen in individuals with the branchiootorenal syndrome. However renal anomalies are absent in branchiootic syndrome patients.</description>
        <dbReference type="MIM" id="608389"/>
    </disease>
    <text>The disease is caused by variants affecting the gene represented in this entry.</text>
</comment>
<comment type="disease">
    <text evidence="18 19">Defects in SIX1 could be a cause of branchiootorenal syndrome (BOR). BOR is an autosomal dominant disorder manifested by various combinations of preauricular pits, branchial fistulae or cysts, lacrimal duct stenosis, hearing loss, structural defects of the outer, middle, or inner ear, and renal dysplasia. Associated defects include asthenic habitus, long narrow facies, constricted palate, deep overbite, and myopia. Hearing loss may be due to mondini type cochlear defect and stapes fixation. Penetrance of BOR syndrome is high, although expressivity can be extremely variable.</text>
</comment>
<comment type="similarity">
    <text evidence="17">Belongs to the SIX/Sine oculis homeobox family.</text>
</comment>
<comment type="online information" name="Atlas of Genetics and Cytogenetics in Oncology and Haematology">
    <link uri="https://atlasgeneticsoncology.org/gene/42302/SIX1"/>
</comment>
<feature type="chain" id="PRO_0000049295" description="Homeobox protein SIX1">
    <location>
        <begin position="1"/>
        <end position="284"/>
    </location>
</feature>
<feature type="DNA-binding region" description="Homeobox" evidence="2">
    <location>
        <begin position="124"/>
        <end position="183"/>
    </location>
</feature>
<feature type="region of interest" description="Disordered" evidence="3">
    <location>
        <begin position="168"/>
        <end position="269"/>
    </location>
</feature>
<feature type="compositionally biased region" description="Basic and acidic residues" evidence="3">
    <location>
        <begin position="179"/>
        <end position="190"/>
    </location>
</feature>
<feature type="compositionally biased region" description="Polar residues" evidence="3">
    <location>
        <begin position="242"/>
        <end position="269"/>
    </location>
</feature>
<feature type="sequence variant" id="VAR_064948" description="In BOS3; crucial for interaction with EYA1 and EYA2 and transcription factor activity; dbSNP:rs397515562." evidence="10 11 13">
    <original>V</original>
    <variation>E</variation>
    <location>
        <position position="17"/>
    </location>
</feature>
<feature type="sequence variant" id="VAR_064949" description="In BOS3." evidence="10">
    <original>H</original>
    <variation>P</variation>
    <location>
        <position position="73"/>
    </location>
</feature>
<feature type="sequence variant" id="VAR_067446" description="In dbSNP:rs17850414." evidence="7 16">
    <original>R</original>
    <variation>C</variation>
    <location>
        <position position="99"/>
    </location>
</feature>
<feature type="sequence variant" id="VAR_064950" description="In BOS3; crucial for protein stability, DNA binding and transcription factor activity; dbSNP:rs397515560." evidence="10 11">
    <original>V</original>
    <variation>G</variation>
    <location>
        <position position="106"/>
    </location>
</feature>
<feature type="sequence variant" id="VAR_064951" description="In BOS3; dbSNP:rs1064794308." evidence="10">
    <original>R</original>
    <variation>Q</variation>
    <location>
        <position position="110"/>
    </location>
</feature>
<feature type="sequence variant" id="VAR_031024" description="In BOS3; crucial for interaction with EYA1, DNA binding and transcription factor activity; dbSNP:rs80356459." evidence="6 10 11">
    <original>R</original>
    <variation>W</variation>
    <location>
        <position position="110"/>
    </location>
</feature>
<feature type="sequence variant" id="VAR_064952" description="In BOS3; crucial for DNA binding and transcription factor activity; dbSNP:rs397515561." evidence="10 11">
    <original>R</original>
    <variation>C</variation>
    <location>
        <position position="112"/>
    </location>
</feature>
<feature type="sequence variant" id="VAR_064953" description="In BOS3; dbSNP:rs121909770." evidence="9">
    <original>W</original>
    <variation>R</variation>
    <location>
        <position position="122"/>
    </location>
</feature>
<feature type="sequence variant" id="VAR_031025" description="In BOS3; crucial for interaction with EYA1, DNA binding and transcription factor activity; dbSNP:rs104894478." evidence="6 10 12">
    <original>Y</original>
    <variation>C</variation>
    <location>
        <position position="129"/>
    </location>
</feature>
<feature type="sequence variant" id="VAR_031026" description="In DFNA23; in addition to deafness the patient had renal anomalies suggesting a branchiootorenal syndrome; crucial for interaction with EYA1, DNA binding and transcription factor activity; dbSNP:rs80356460." evidence="6 11 13">
    <location>
        <position position="133"/>
    </location>
</feature>
<feature type="sequence variant" id="VAR_064954" description="In BOR; uncertain significance; dbSNP:rs368974927." evidence="12">
    <original>P</original>
    <variation>L</variation>
    <location>
        <position position="249"/>
    </location>
</feature>
<feature type="helix" evidence="20">
    <location>
        <begin position="11"/>
        <end position="23"/>
    </location>
</feature>
<feature type="helix" evidence="20">
    <location>
        <begin position="27"/>
        <end position="36"/>
    </location>
</feature>
<feature type="helix" evidence="20">
    <location>
        <begin position="47"/>
        <end position="60"/>
    </location>
</feature>
<feature type="helix" evidence="20">
    <location>
        <begin position="63"/>
        <end position="72"/>
    </location>
</feature>
<feature type="helix" evidence="20">
    <location>
        <begin position="77"/>
        <end position="79"/>
    </location>
</feature>
<feature type="helix" evidence="20">
    <location>
        <begin position="80"/>
        <end position="99"/>
    </location>
</feature>
<feature type="helix" evidence="20">
    <location>
        <begin position="105"/>
        <end position="114"/>
    </location>
</feature>
<feature type="helix" evidence="20">
    <location>
        <begin position="135"/>
        <end position="145"/>
    </location>
</feature>
<feature type="helix" evidence="20">
    <location>
        <begin position="151"/>
        <end position="161"/>
    </location>
</feature>
<feature type="helix" evidence="20">
    <location>
        <begin position="165"/>
        <end position="184"/>
    </location>
</feature>
<name>SIX1_HUMAN</name>
<keyword id="KW-0002">3D-structure</keyword>
<keyword id="KW-0010">Activator</keyword>
<keyword id="KW-0053">Apoptosis</keyword>
<keyword id="KW-0963">Cytoplasm</keyword>
<keyword id="KW-0209">Deafness</keyword>
<keyword id="KW-0217">Developmental protein</keyword>
<keyword id="KW-0225">Disease variant</keyword>
<keyword id="KW-0238">DNA-binding</keyword>
<keyword id="KW-0371">Homeobox</keyword>
<keyword id="KW-1010">Non-syndromic deafness</keyword>
<keyword id="KW-0539">Nucleus</keyword>
<keyword id="KW-0597">Phosphoprotein</keyword>
<keyword id="KW-1267">Proteomics identification</keyword>
<keyword id="KW-1185">Reference proteome</keyword>
<keyword id="KW-0678">Repressor</keyword>
<keyword id="KW-0804">Transcription</keyword>
<keyword id="KW-0805">Transcription regulation</keyword>
<keyword id="KW-0832">Ubl conjugation</keyword>
<sequence>MSMLPSFGFTQEQVACVCEVLQQGGNLERLGRFLWSLPACDHLHKNESVLKAKAVVAFHRGNFRELYKILESHQFSPHNHPKLQQLWLKAHYVEAEKLRGRPLGAVGKYRVRRKFPLPRTIWDGEETSYCFKEKSRGVLREWYAHNPYPSPREKRELAEATGLTTTQVSNWFKNRRQRDRAAEAKERENTENNNSSSNKQNQLSPLEGGKPLMSSSEEEFSPPQSPDQNSVLLLQGNMGHARSSNYSLPGLTASQPSHGLQTHQHQLQDSLLGPLTSSLVDLGS</sequence>
<proteinExistence type="evidence at protein level"/>
<protein>
    <recommendedName>
        <fullName>Homeobox protein SIX1</fullName>
    </recommendedName>
    <alternativeName>
        <fullName>Sine oculis homeobox homolog 1</fullName>
    </alternativeName>
</protein>
<reference key="1">
    <citation type="journal article" date="1996" name="Genomics">
        <title>Cloning of the human SIX1 gene and its assignment to chromosome 14.</title>
        <authorList>
            <person name="Boucher C.A."/>
            <person name="Carey N."/>
            <person name="Edwards Y.H."/>
            <person name="Siciliano M.J."/>
            <person name="Johnson K.J."/>
        </authorList>
    </citation>
    <scope>NUCLEOTIDE SEQUENCE [MRNA]</scope>
    <source>
        <tissue>Muscle</tissue>
    </source>
</reference>
<reference key="2">
    <citation type="submission" date="2000-11" db="EMBL/GenBank/DDBJ databases">
        <title>Partial genomic sequence of human SIX1.</title>
        <authorList>
            <person name="Gallardo M.E."/>
            <person name="Rodriguez de Cordoba S."/>
        </authorList>
    </citation>
    <scope>NUCLEOTIDE SEQUENCE [GENOMIC DNA]</scope>
</reference>
<reference key="3">
    <citation type="submission" date="2003-05" db="EMBL/GenBank/DDBJ databases">
        <title>Cloning of human full-length CDSs in BD Creator(TM) system donor vector.</title>
        <authorList>
            <person name="Kalnine N."/>
            <person name="Chen X."/>
            <person name="Rolfs A."/>
            <person name="Halleck A."/>
            <person name="Hines L."/>
            <person name="Eisenstein S."/>
            <person name="Koundinya M."/>
            <person name="Raphael J."/>
            <person name="Moreira D."/>
            <person name="Kelley T."/>
            <person name="LaBaer J."/>
            <person name="Lin Y."/>
            <person name="Phelan M."/>
            <person name="Farmer A."/>
        </authorList>
    </citation>
    <scope>NUCLEOTIDE SEQUENCE [LARGE SCALE MRNA]</scope>
    <scope>VARIANT CYS-99</scope>
</reference>
<reference key="4">
    <citation type="journal article" date="2004" name="Genome Res.">
        <title>The status, quality, and expansion of the NIH full-length cDNA project: the Mammalian Gene Collection (MGC).</title>
        <authorList>
            <consortium name="The MGC Project Team"/>
        </authorList>
    </citation>
    <scope>NUCLEOTIDE SEQUENCE [LARGE SCALE MRNA]</scope>
    <scope>VARIANT CYS-99</scope>
    <source>
        <tissue>Muscle</tissue>
    </source>
</reference>
<reference key="5">
    <citation type="journal article" date="2000" name="J. Biol. Chem.">
        <title>Cell cycle-regulated phosphorylation of the human SIX1 homeodomain protein.</title>
        <authorList>
            <person name="Ford H.L."/>
            <person name="Landesman-Bollag E."/>
            <person name="Dacwag C.S."/>
            <person name="Stukenberg P.T."/>
            <person name="Pardee A.B."/>
            <person name="Seldin D.C."/>
        </authorList>
    </citation>
    <scope>SUBCELLULAR LOCATION</scope>
    <scope>PHOSPHORYLATION</scope>
</reference>
<reference key="6">
    <citation type="journal article" date="2004" name="Proc. Natl. Acad. Sci. U.S.A.">
        <title>The Six1 homeoprotein stimulates tumorigenesis by reactivation of cyclin A1.</title>
        <authorList>
            <person name="Coletta R.D."/>
            <person name="Christensen K."/>
            <person name="Reichenberger K.J."/>
            <person name="Lamb J."/>
            <person name="Micomonaco D."/>
            <person name="Huang L."/>
            <person name="Wolf D.M."/>
            <person name="Muller-Tidow C."/>
            <person name="Golub T.R."/>
            <person name="Kawakami K."/>
            <person name="Ford H.L."/>
        </authorList>
    </citation>
    <scope>FUNCTION</scope>
</reference>
<reference key="7">
    <citation type="journal article" date="2007" name="Oncogene">
        <title>Cell cycle regulation of the human Six1 homeoprotein is mediated by APC(Cdh1).</title>
        <authorList>
            <person name="Christensen K.L."/>
            <person name="Brennan J.D."/>
            <person name="Aldridge C.S."/>
            <person name="Ford H.L."/>
        </authorList>
    </citation>
    <scope>UBIQUITINATION</scope>
    <scope>INTERACTION WITH CDH1</scope>
    <scope>SUBCELLULAR LOCATION</scope>
</reference>
<reference key="8">
    <citation type="journal article" date="2015" name="Am. J. Hum. Genet.">
        <title>Mutations in TBX18 cause dominant urinary tract malformations via transcriptional dysregulation of ureter development.</title>
        <authorList>
            <person name="Vivante A."/>
            <person name="Kleppa M.J."/>
            <person name="Schulz J."/>
            <person name="Kohl S."/>
            <person name="Sharma A."/>
            <person name="Chen J."/>
            <person name="Shril S."/>
            <person name="Hwang D.Y."/>
            <person name="Weiss A.C."/>
            <person name="Kaminski M.M."/>
            <person name="Shukrun R."/>
            <person name="Kemper M.J."/>
            <person name="Lehnhardt A."/>
            <person name="Beetz R."/>
            <person name="Sanna-Cherchi S."/>
            <person name="Verbitsky M."/>
            <person name="Gharavi A.G."/>
            <person name="Stuart H.M."/>
            <person name="Feather S.A."/>
            <person name="Goodship J.A."/>
            <person name="Goodship T.H."/>
            <person name="Woolf A.S."/>
            <person name="Westra S.J."/>
            <person name="Doody D.P."/>
            <person name="Bauer S.B."/>
            <person name="Lee R.S."/>
            <person name="Adam R.M."/>
            <person name="Lu W."/>
            <person name="Reutter H.M."/>
            <person name="Kehinde E.O."/>
            <person name="Mancini E.J."/>
            <person name="Lifton R.P."/>
            <person name="Tasic V."/>
            <person name="Lienkamp S.S."/>
            <person name="Jueppner H."/>
            <person name="Kispert A."/>
            <person name="Hildebrandt F."/>
        </authorList>
    </citation>
    <scope>INTERACTION WITH TBX18</scope>
</reference>
<reference key="9">
    <citation type="journal article" date="2016" name="PLoS Genet.">
        <title>Comparative Transcriptomic and Epigenomic Analyses Reveal New Regulators of Murine Brown Adipogenesis.</title>
        <authorList>
            <person name="Brunmeir R."/>
            <person name="Wu J."/>
            <person name="Peng X."/>
            <person name="Kim S.Y."/>
            <person name="Julien S.G."/>
            <person name="Zhang Q."/>
            <person name="Xie W."/>
            <person name="Xu F."/>
        </authorList>
    </citation>
    <scope>FUNCTION</scope>
    <scope>INTERACTION WITH CEBPA; CEBPB AND EBF2</scope>
</reference>
<reference key="10">
    <citation type="journal article" date="2013" name="Nat. Struct. Mol. Biol.">
        <title>Structure-function analyses of the human SIX1-EYA2 complex reveal insights into metastasis and BOR syndrome.</title>
        <authorList>
            <person name="Patrick A.N."/>
            <person name="Cabrera J.H."/>
            <person name="Smith A.L."/>
            <person name="Chen X.S."/>
            <person name="Ford H.L."/>
            <person name="Zhao R."/>
        </authorList>
    </citation>
    <scope>X-RAY CRYSTALLOGRAPHY (1.99 ANGSTROMS) OF 1-189 IN COMPLEX WITH EYA2</scope>
    <scope>FUNCTION</scope>
    <scope>SUBUNIT</scope>
    <scope>DNA-BINDING</scope>
    <scope>CHARACTERIZATION OF VARIANT BOS3 GLU-17</scope>
    <scope>CHARACTERIZATION OF VARIANT DFNA23 GLU-133 DEL</scope>
</reference>
<reference key="11">
    <citation type="journal article" date="2004" name="Proc. Natl. Acad. Sci. U.S.A.">
        <title>SIX1 mutations cause branchio-oto-renal syndrome by disruption of EYA1-SIX1-DNA complexes.</title>
        <authorList>
            <person name="Ruf R.G."/>
            <person name="Xu P.-X."/>
            <person name="Silvius D."/>
            <person name="Otto E.A."/>
            <person name="Beekmann F."/>
            <person name="Muerb U.T."/>
            <person name="Kumar S."/>
            <person name="Neuhaus T.J."/>
            <person name="Kemper M.J."/>
            <person name="Raymond R.M. Jr."/>
            <person name="Brophy P.D."/>
            <person name="Berkman J."/>
            <person name="Gattas M."/>
            <person name="Hyland V."/>
            <person name="Ruf E.-M."/>
            <person name="Schwartz C."/>
            <person name="Chang E.H."/>
            <person name="Smith R.J.H."/>
            <person name="Stratakis C.A."/>
            <person name="Weil D."/>
            <person name="Petit C."/>
            <person name="Hildebrandt F."/>
        </authorList>
    </citation>
    <scope>VARIANTS BOS3 TRP-110 AND CYS-129</scope>
    <scope>VARIANT DFNA23 GLU-133 DEL</scope>
    <scope>CHARACTERIZATION OF VARIANTS BOS3 TRP-110 AND CYS-129</scope>
    <scope>CHARACTERIZATION OF VARIANT DFNA23 GLU-133 DEL</scope>
    <scope>FUNCTION</scope>
    <scope>POSSIBLE INVOLVEMENT IN BOR</scope>
</reference>
<reference key="12">
    <citation type="journal article" date="2007" name="Eur. J. Hum. Genet.">
        <title>Branchio-oto-renal syndrome: detection of EYA1 and SIX1 mutations in five out of six Danish families by combining linkage, MLPA and sequencing analyses.</title>
        <authorList>
            <person name="Sanggaard K.M."/>
            <person name="Rendtorff N.D."/>
            <person name="Kjaer K.W."/>
            <person name="Eiberg H."/>
            <person name="Johnsen T."/>
            <person name="Gimsing S."/>
            <person name="Dyrmose J."/>
            <person name="Nielsen K.O."/>
            <person name="Lage K."/>
            <person name="Tranebjaerg L."/>
        </authorList>
    </citation>
    <scope>VARIANT BOS3 ARG-122</scope>
</reference>
<reference key="13">
    <citation type="journal article" date="2008" name="Hum. Mutat.">
        <title>SIX1 mutation screening in 247 branchio-oto-renal syndrome families: a recurrent missense mutation associated with BOR.</title>
        <authorList>
            <person name="Kochhar A."/>
            <person name="Orten D.J."/>
            <person name="Sorensen J.L."/>
            <person name="Fischer S.M."/>
            <person name="Cremers C.W."/>
            <person name="Kimberling W.J."/>
            <person name="Smith R.J."/>
        </authorList>
    </citation>
    <scope>VARIANTS BOS3 GLU-17; PRO-73; GLY-106; GLN-110; TRP-110; CYS-112 AND CYS-129</scope>
</reference>
<reference key="14">
    <citation type="journal article" date="2009" name="J. Biol. Chem.">
        <title>Biochemical and functional characterization of six SIX1 Branchio-oto-renal syndrome mutations.</title>
        <authorList>
            <person name="Patrick A.N."/>
            <person name="Schiemann B.J."/>
            <person name="Yang K."/>
            <person name="Zhao R."/>
            <person name="Ford H.L."/>
        </authorList>
    </citation>
    <scope>CHARACTERIZATION OF VARIANTS BOS3 GLU-17; GLY-106; TRP-110 AND CYS-112</scope>
    <scope>CHARACTERIZATION OF VARIANT DFNA23 GLU-133 DEL</scope>
    <scope>FUNCTION</scope>
    <scope>DNA-BINDING</scope>
    <scope>SUBCELLULAR LOCATION</scope>
    <scope>INTERACTION WITH EYA2</scope>
    <scope>POSSIBLE INVOLVEMENT IN BOR</scope>
</reference>
<reference key="15">
    <citation type="journal article" date="2011" name="Hum. Mutat.">
        <title>Mutation screening of the EYA1, SIX1, and SIX5 genes in a large cohort of patients harboring branchio-oto-renal syndrome calls into question the pathogenic role of SIX5 mutations.</title>
        <authorList>
            <person name="Krug P."/>
            <person name="Moriniere V."/>
            <person name="Marlin S."/>
            <person name="Koubi V."/>
            <person name="Gabriel H.D."/>
            <person name="Colin E."/>
            <person name="Bonneau D."/>
            <person name="Salomon R."/>
            <person name="Antignac C."/>
            <person name="Heidet L."/>
        </authorList>
    </citation>
    <scope>VARIANT BOS3 CYS-129</scope>
    <scope>VARIANT BOR LEU-249</scope>
</reference>
<organism>
    <name type="scientific">Homo sapiens</name>
    <name type="common">Human</name>
    <dbReference type="NCBI Taxonomy" id="9606"/>
    <lineage>
        <taxon>Eukaryota</taxon>
        <taxon>Metazoa</taxon>
        <taxon>Chordata</taxon>
        <taxon>Craniata</taxon>
        <taxon>Vertebrata</taxon>
        <taxon>Euteleostomi</taxon>
        <taxon>Mammalia</taxon>
        <taxon>Eutheria</taxon>
        <taxon>Euarchontoglires</taxon>
        <taxon>Primates</taxon>
        <taxon>Haplorrhini</taxon>
        <taxon>Catarrhini</taxon>
        <taxon>Hominidae</taxon>
        <taxon>Homo</taxon>
    </lineage>
</organism>
<gene>
    <name type="primary">SIX1</name>
</gene>
<accession>Q15475</accession>
<accession>Q53Y16</accession>
<accession>Q96H64</accession>
<evidence type="ECO:0000250" key="1">
    <source>
        <dbReference type="UniProtKB" id="Q62231"/>
    </source>
</evidence>
<evidence type="ECO:0000255" key="2">
    <source>
        <dbReference type="PROSITE-ProRule" id="PRU00108"/>
    </source>
</evidence>
<evidence type="ECO:0000256" key="3">
    <source>
        <dbReference type="SAM" id="MobiDB-lite"/>
    </source>
</evidence>
<evidence type="ECO:0000269" key="4">
    <source>
    </source>
</evidence>
<evidence type="ECO:0000269" key="5">
    <source>
    </source>
</evidence>
<evidence type="ECO:0000269" key="6">
    <source>
    </source>
</evidence>
<evidence type="ECO:0000269" key="7">
    <source>
    </source>
</evidence>
<evidence type="ECO:0000269" key="8">
    <source>
    </source>
</evidence>
<evidence type="ECO:0000269" key="9">
    <source>
    </source>
</evidence>
<evidence type="ECO:0000269" key="10">
    <source>
    </source>
</evidence>
<evidence type="ECO:0000269" key="11">
    <source>
    </source>
</evidence>
<evidence type="ECO:0000269" key="12">
    <source>
    </source>
</evidence>
<evidence type="ECO:0000269" key="13">
    <source>
    </source>
</evidence>
<evidence type="ECO:0000269" key="14">
    <source>
    </source>
</evidence>
<evidence type="ECO:0000269" key="15">
    <source>
    </source>
</evidence>
<evidence type="ECO:0000269" key="16">
    <source ref="3"/>
</evidence>
<evidence type="ECO:0000305" key="17"/>
<evidence type="ECO:0000305" key="18">
    <source>
    </source>
</evidence>
<evidence type="ECO:0000305" key="19">
    <source>
    </source>
</evidence>
<evidence type="ECO:0007829" key="20">
    <source>
        <dbReference type="PDB" id="4EGC"/>
    </source>
</evidence>
<dbReference type="EMBL" id="X91868">
    <property type="protein sequence ID" value="CAA62974.1"/>
    <property type="molecule type" value="mRNA"/>
</dbReference>
<dbReference type="EMBL" id="AF323497">
    <property type="protein sequence ID" value="AAK06772.1"/>
    <property type="molecule type" value="Genomic_DNA"/>
</dbReference>
<dbReference type="EMBL" id="BT007083">
    <property type="protein sequence ID" value="AAP35746.1"/>
    <property type="molecule type" value="mRNA"/>
</dbReference>
<dbReference type="EMBL" id="BC008874">
    <property type="protein sequence ID" value="AAH08874.1"/>
    <property type="molecule type" value="mRNA"/>
</dbReference>
<dbReference type="CCDS" id="CCDS9748.1"/>
<dbReference type="RefSeq" id="NP_005973.1">
    <property type="nucleotide sequence ID" value="NM_005982.4"/>
</dbReference>
<dbReference type="PDB" id="4EGC">
    <property type="method" value="X-ray"/>
    <property type="resolution" value="1.99 A"/>
    <property type="chains" value="A=1-189"/>
</dbReference>
<dbReference type="PDBsum" id="4EGC"/>
<dbReference type="SMR" id="Q15475"/>
<dbReference type="BioGRID" id="112386">
    <property type="interactions" value="43"/>
</dbReference>
<dbReference type="CORUM" id="Q15475"/>
<dbReference type="DIP" id="DIP-34448N"/>
<dbReference type="FunCoup" id="Q15475">
    <property type="interactions" value="1451"/>
</dbReference>
<dbReference type="IntAct" id="Q15475">
    <property type="interactions" value="28"/>
</dbReference>
<dbReference type="MINT" id="Q15475"/>
<dbReference type="STRING" id="9606.ENSP00000494686"/>
<dbReference type="ChEMBL" id="CHEMBL4630826"/>
<dbReference type="GlyGen" id="Q15475">
    <property type="glycosylation" value="1 site, 1 O-linked glycan (1 site)"/>
</dbReference>
<dbReference type="iPTMnet" id="Q15475"/>
<dbReference type="PhosphoSitePlus" id="Q15475"/>
<dbReference type="BioMuta" id="SIX1"/>
<dbReference type="DMDM" id="2495290"/>
<dbReference type="jPOST" id="Q15475"/>
<dbReference type="MassIVE" id="Q15475"/>
<dbReference type="PaxDb" id="9606-ENSP00000247182"/>
<dbReference type="PeptideAtlas" id="Q15475"/>
<dbReference type="ProteomicsDB" id="60606"/>
<dbReference type="Pumba" id="Q15475"/>
<dbReference type="Antibodypedia" id="39">
    <property type="antibodies" value="220 antibodies from 30 providers"/>
</dbReference>
<dbReference type="DNASU" id="6495"/>
<dbReference type="Ensembl" id="ENST00000645694.3">
    <property type="protein sequence ID" value="ENSP00000494686.1"/>
    <property type="gene ID" value="ENSG00000126778.12"/>
</dbReference>
<dbReference type="GeneID" id="6495"/>
<dbReference type="KEGG" id="hsa:6495"/>
<dbReference type="MANE-Select" id="ENST00000645694.3">
    <property type="protein sequence ID" value="ENSP00000494686.1"/>
    <property type="RefSeq nucleotide sequence ID" value="NM_005982.4"/>
    <property type="RefSeq protein sequence ID" value="NP_005973.1"/>
</dbReference>
<dbReference type="UCSC" id="uc001xfb.5">
    <property type="organism name" value="human"/>
</dbReference>
<dbReference type="AGR" id="HGNC:10887"/>
<dbReference type="CTD" id="6495"/>
<dbReference type="DisGeNET" id="6495"/>
<dbReference type="GeneCards" id="SIX1"/>
<dbReference type="GeneReviews" id="SIX1"/>
<dbReference type="HGNC" id="HGNC:10887">
    <property type="gene designation" value="SIX1"/>
</dbReference>
<dbReference type="HPA" id="ENSG00000126778">
    <property type="expression patterns" value="Tissue enhanced (parathyroid gland, salivary gland, skeletal muscle, tongue)"/>
</dbReference>
<dbReference type="MalaCards" id="SIX1"/>
<dbReference type="MIM" id="601205">
    <property type="type" value="gene"/>
</dbReference>
<dbReference type="MIM" id="605192">
    <property type="type" value="phenotype"/>
</dbReference>
<dbReference type="MIM" id="608389">
    <property type="type" value="phenotype"/>
</dbReference>
<dbReference type="neXtProt" id="NX_Q15475"/>
<dbReference type="OpenTargets" id="ENSG00000126778"/>
<dbReference type="Orphanet" id="107">
    <property type="disease" value="BOR syndrome"/>
</dbReference>
<dbReference type="Orphanet" id="52429">
    <property type="disease" value="Branchiootic syndrome"/>
</dbReference>
<dbReference type="Orphanet" id="90635">
    <property type="disease" value="Rare autosomal dominant non-syndromic sensorineural deafness type DFNA"/>
</dbReference>
<dbReference type="PharmGKB" id="PA35787"/>
<dbReference type="VEuPathDB" id="HostDB:ENSG00000126778"/>
<dbReference type="eggNOG" id="KOG0775">
    <property type="taxonomic scope" value="Eukaryota"/>
</dbReference>
<dbReference type="GeneTree" id="ENSGT00940000156487"/>
<dbReference type="HOGENOM" id="CLU_046914_2_0_1"/>
<dbReference type="InParanoid" id="Q15475"/>
<dbReference type="OMA" id="YKAHYVE"/>
<dbReference type="OrthoDB" id="3501850at2759"/>
<dbReference type="PAN-GO" id="Q15475">
    <property type="GO annotations" value="7 GO annotations based on evolutionary models"/>
</dbReference>
<dbReference type="PhylomeDB" id="Q15475"/>
<dbReference type="TreeFam" id="TF315545"/>
<dbReference type="PathwayCommons" id="Q15475"/>
<dbReference type="Reactome" id="R-HSA-9830674">
    <property type="pathway name" value="Formation of the ureteric bud"/>
</dbReference>
<dbReference type="SignaLink" id="Q15475"/>
<dbReference type="SIGNOR" id="Q15475"/>
<dbReference type="BioGRID-ORCS" id="6495">
    <property type="hits" value="20 hits in 1169 CRISPR screens"/>
</dbReference>
<dbReference type="ChiTaRS" id="SIX1">
    <property type="organism name" value="human"/>
</dbReference>
<dbReference type="EvolutionaryTrace" id="Q15475"/>
<dbReference type="GeneWiki" id="SIX1"/>
<dbReference type="GenomeRNAi" id="6495"/>
<dbReference type="Pharos" id="Q15475">
    <property type="development level" value="Tbio"/>
</dbReference>
<dbReference type="PRO" id="PR:Q15475"/>
<dbReference type="Proteomes" id="UP000005640">
    <property type="component" value="Chromosome 14"/>
</dbReference>
<dbReference type="RNAct" id="Q15475">
    <property type="molecule type" value="protein"/>
</dbReference>
<dbReference type="Bgee" id="ENSG00000126778">
    <property type="expression patterns" value="Expressed in skeletal muscle tissue of biceps brachii and 138 other cell types or tissues"/>
</dbReference>
<dbReference type="ExpressionAtlas" id="Q15475">
    <property type="expression patterns" value="baseline and differential"/>
</dbReference>
<dbReference type="GO" id="GO:0000785">
    <property type="term" value="C:chromatin"/>
    <property type="evidence" value="ECO:0000247"/>
    <property type="project" value="NTNU_SB"/>
</dbReference>
<dbReference type="GO" id="GO:0005737">
    <property type="term" value="C:cytoplasm"/>
    <property type="evidence" value="ECO:0007669"/>
    <property type="project" value="UniProtKB-SubCell"/>
</dbReference>
<dbReference type="GO" id="GO:0005730">
    <property type="term" value="C:nucleolus"/>
    <property type="evidence" value="ECO:0000314"/>
    <property type="project" value="HPA"/>
</dbReference>
<dbReference type="GO" id="GO:0005654">
    <property type="term" value="C:nucleoplasm"/>
    <property type="evidence" value="ECO:0000314"/>
    <property type="project" value="HPA"/>
</dbReference>
<dbReference type="GO" id="GO:0005634">
    <property type="term" value="C:nucleus"/>
    <property type="evidence" value="ECO:0000314"/>
    <property type="project" value="UniProtKB"/>
</dbReference>
<dbReference type="GO" id="GO:0005667">
    <property type="term" value="C:transcription regulator complex"/>
    <property type="evidence" value="ECO:0000250"/>
    <property type="project" value="UniProtKB"/>
</dbReference>
<dbReference type="GO" id="GO:0003682">
    <property type="term" value="F:chromatin binding"/>
    <property type="evidence" value="ECO:0007669"/>
    <property type="project" value="Ensembl"/>
</dbReference>
<dbReference type="GO" id="GO:0003677">
    <property type="term" value="F:DNA binding"/>
    <property type="evidence" value="ECO:0000314"/>
    <property type="project" value="UniProtKB"/>
</dbReference>
<dbReference type="GO" id="GO:0001228">
    <property type="term" value="F:DNA-binding transcription activator activity, RNA polymerase II-specific"/>
    <property type="evidence" value="ECO:0000314"/>
    <property type="project" value="NTNU_SB"/>
</dbReference>
<dbReference type="GO" id="GO:0003700">
    <property type="term" value="F:DNA-binding transcription factor activity"/>
    <property type="evidence" value="ECO:0000314"/>
    <property type="project" value="UniProtKB"/>
</dbReference>
<dbReference type="GO" id="GO:0000981">
    <property type="term" value="F:DNA-binding transcription factor activity, RNA polymerase II-specific"/>
    <property type="evidence" value="ECO:0000247"/>
    <property type="project" value="NTNU_SB"/>
</dbReference>
<dbReference type="GO" id="GO:0000978">
    <property type="term" value="F:RNA polymerase II cis-regulatory region sequence-specific DNA binding"/>
    <property type="evidence" value="ECO:0000314"/>
    <property type="project" value="NTNU_SB"/>
</dbReference>
<dbReference type="GO" id="GO:0043565">
    <property type="term" value="F:sequence-specific DNA binding"/>
    <property type="evidence" value="ECO:0000314"/>
    <property type="project" value="UniProtKB"/>
</dbReference>
<dbReference type="GO" id="GO:1990837">
    <property type="term" value="F:sequence-specific double-stranded DNA binding"/>
    <property type="evidence" value="ECO:0000314"/>
    <property type="project" value="ARUK-UCL"/>
</dbReference>
<dbReference type="GO" id="GO:0000976">
    <property type="term" value="F:transcription cis-regulatory region binding"/>
    <property type="evidence" value="ECO:0000314"/>
    <property type="project" value="UniProtKB"/>
</dbReference>
<dbReference type="GO" id="GO:0001223">
    <property type="term" value="F:transcription coactivator binding"/>
    <property type="evidence" value="ECO:0007669"/>
    <property type="project" value="Ensembl"/>
</dbReference>
<dbReference type="GO" id="GO:0035909">
    <property type="term" value="P:aorta morphogenesis"/>
    <property type="evidence" value="ECO:0007669"/>
    <property type="project" value="Ensembl"/>
</dbReference>
<dbReference type="GO" id="GO:0006915">
    <property type="term" value="P:apoptotic process"/>
    <property type="evidence" value="ECO:0007669"/>
    <property type="project" value="UniProtKB-KW"/>
</dbReference>
<dbReference type="GO" id="GO:0001658">
    <property type="term" value="P:branching involved in ureteric bud morphogenesis"/>
    <property type="evidence" value="ECO:0000250"/>
    <property type="project" value="UniProtKB"/>
</dbReference>
<dbReference type="GO" id="GO:1905243">
    <property type="term" value="P:cellular response to 3,3',5-triiodo-L-thyronine"/>
    <property type="evidence" value="ECO:0007669"/>
    <property type="project" value="Ensembl"/>
</dbReference>
<dbReference type="GO" id="GO:0090103">
    <property type="term" value="P:cochlea morphogenesis"/>
    <property type="evidence" value="ECO:0007669"/>
    <property type="project" value="Ensembl"/>
</dbReference>
<dbReference type="GO" id="GO:0048701">
    <property type="term" value="P:embryonic cranial skeleton morphogenesis"/>
    <property type="evidence" value="ECO:0000250"/>
    <property type="project" value="UniProtKB"/>
</dbReference>
<dbReference type="GO" id="GO:0048704">
    <property type="term" value="P:embryonic skeletal system morphogenesis"/>
    <property type="evidence" value="ECO:0000250"/>
    <property type="project" value="UniProtKB"/>
</dbReference>
<dbReference type="GO" id="GO:0086100">
    <property type="term" value="P:endothelin receptor signaling pathway"/>
    <property type="evidence" value="ECO:0007669"/>
    <property type="project" value="Ensembl"/>
</dbReference>
<dbReference type="GO" id="GO:0030855">
    <property type="term" value="P:epithelial cell differentiation"/>
    <property type="evidence" value="ECO:0000250"/>
    <property type="project" value="UniProtKB"/>
</dbReference>
<dbReference type="GO" id="GO:0021610">
    <property type="term" value="P:facial nerve morphogenesis"/>
    <property type="evidence" value="ECO:0007669"/>
    <property type="project" value="Ensembl"/>
</dbReference>
<dbReference type="GO" id="GO:0061197">
    <property type="term" value="P:fungiform papilla morphogenesis"/>
    <property type="evidence" value="ECO:0007669"/>
    <property type="project" value="Ensembl"/>
</dbReference>
<dbReference type="GO" id="GO:0010467">
    <property type="term" value="P:gene expression"/>
    <property type="evidence" value="ECO:0007669"/>
    <property type="project" value="Ensembl"/>
</dbReference>
<dbReference type="GO" id="GO:0048699">
    <property type="term" value="P:generation of neurons"/>
    <property type="evidence" value="ECO:0000250"/>
    <property type="project" value="UniProtKB"/>
</dbReference>
<dbReference type="GO" id="GO:0048839">
    <property type="term" value="P:inner ear development"/>
    <property type="evidence" value="ECO:0000250"/>
    <property type="project" value="UniProtKB"/>
</dbReference>
<dbReference type="GO" id="GO:0042472">
    <property type="term" value="P:inner ear morphogenesis"/>
    <property type="evidence" value="ECO:0000250"/>
    <property type="project" value="UniProtKB"/>
</dbReference>
<dbReference type="GO" id="GO:0001822">
    <property type="term" value="P:kidney development"/>
    <property type="evidence" value="ECO:0000250"/>
    <property type="project" value="UniProtKB"/>
</dbReference>
<dbReference type="GO" id="GO:0072198">
    <property type="term" value="P:mesenchymal cell proliferation involved in ureter development"/>
    <property type="evidence" value="ECO:0007669"/>
    <property type="project" value="Ensembl"/>
</dbReference>
<dbReference type="GO" id="GO:0072172">
    <property type="term" value="P:mesonephric tubule formation"/>
    <property type="evidence" value="ECO:0000250"/>
    <property type="project" value="UniProtKB"/>
</dbReference>
<dbReference type="GO" id="GO:0072075">
    <property type="term" value="P:metanephric mesenchyme development"/>
    <property type="evidence" value="ECO:0000250"/>
    <property type="project" value="UniProtKB"/>
</dbReference>
<dbReference type="GO" id="GO:0042474">
    <property type="term" value="P:middle ear morphogenesis"/>
    <property type="evidence" value="ECO:0007669"/>
    <property type="project" value="Ensembl"/>
</dbReference>
<dbReference type="GO" id="GO:0051451">
    <property type="term" value="P:myoblast migration"/>
    <property type="evidence" value="ECO:0000250"/>
    <property type="project" value="UniProtKB"/>
</dbReference>
<dbReference type="GO" id="GO:0051450">
    <property type="term" value="P:myoblast proliferation"/>
    <property type="evidence" value="ECO:0007669"/>
    <property type="project" value="Ensembl"/>
</dbReference>
<dbReference type="GO" id="GO:0061055">
    <property type="term" value="P:myotome development"/>
    <property type="evidence" value="ECO:0007669"/>
    <property type="project" value="Ensembl"/>
</dbReference>
<dbReference type="GO" id="GO:0043524">
    <property type="term" value="P:negative regulation of neuron apoptotic process"/>
    <property type="evidence" value="ECO:0000250"/>
    <property type="project" value="UniProtKB"/>
</dbReference>
<dbReference type="GO" id="GO:0000122">
    <property type="term" value="P:negative regulation of transcription by RNA polymerase II"/>
    <property type="evidence" value="ECO:0007669"/>
    <property type="project" value="Ensembl"/>
</dbReference>
<dbReference type="GO" id="GO:0014033">
    <property type="term" value="P:neural crest cell differentiation"/>
    <property type="evidence" value="ECO:0007669"/>
    <property type="project" value="Ensembl"/>
</dbReference>
<dbReference type="GO" id="GO:0048665">
    <property type="term" value="P:neuron fate specification"/>
    <property type="evidence" value="ECO:0007669"/>
    <property type="project" value="Ensembl"/>
</dbReference>
<dbReference type="GO" id="GO:0007219">
    <property type="term" value="P:Notch signaling pathway"/>
    <property type="evidence" value="ECO:0007669"/>
    <property type="project" value="Ensembl"/>
</dbReference>
<dbReference type="GO" id="GO:0030910">
    <property type="term" value="P:olfactory placode formation"/>
    <property type="evidence" value="ECO:0007669"/>
    <property type="project" value="Ensembl"/>
</dbReference>
<dbReference type="GO" id="GO:0001759">
    <property type="term" value="P:organ induction"/>
    <property type="evidence" value="ECO:0000250"/>
    <property type="project" value="UniProtKB"/>
</dbReference>
<dbReference type="GO" id="GO:0071599">
    <property type="term" value="P:otic vesicle development"/>
    <property type="evidence" value="ECO:0007669"/>
    <property type="project" value="Ensembl"/>
</dbReference>
<dbReference type="GO" id="GO:0003151">
    <property type="term" value="P:outflow tract morphogenesis"/>
    <property type="evidence" value="ECO:0007669"/>
    <property type="project" value="Ensembl"/>
</dbReference>
<dbReference type="GO" id="GO:0007389">
    <property type="term" value="P:pattern specification process"/>
    <property type="evidence" value="ECO:0000250"/>
    <property type="project" value="UniProtKB"/>
</dbReference>
<dbReference type="GO" id="GO:0060037">
    <property type="term" value="P:pharyngeal system development"/>
    <property type="evidence" value="ECO:0007669"/>
    <property type="project" value="Ensembl"/>
</dbReference>
<dbReference type="GO" id="GO:0090190">
    <property type="term" value="P:positive regulation of branching involved in ureteric bud morphogenesis"/>
    <property type="evidence" value="ECO:0000250"/>
    <property type="project" value="UniProtKB"/>
</dbReference>
<dbReference type="GO" id="GO:0090336">
    <property type="term" value="P:positive regulation of brown fat cell differentiation"/>
    <property type="evidence" value="ECO:0000250"/>
    <property type="project" value="UniProtKB"/>
</dbReference>
<dbReference type="GO" id="GO:0045893">
    <property type="term" value="P:positive regulation of DNA-templated transcription"/>
    <property type="evidence" value="ECO:0000315"/>
    <property type="project" value="UniProtKB"/>
</dbReference>
<dbReference type="GO" id="GO:2000729">
    <property type="term" value="P:positive regulation of mesenchymal cell proliferation involved in ureter development"/>
    <property type="evidence" value="ECO:0007669"/>
    <property type="project" value="Ensembl"/>
</dbReference>
<dbReference type="GO" id="GO:2000288">
    <property type="term" value="P:positive regulation of myoblast proliferation"/>
    <property type="evidence" value="ECO:0007669"/>
    <property type="project" value="Ensembl"/>
</dbReference>
<dbReference type="GO" id="GO:0072513">
    <property type="term" value="P:positive regulation of secondary heart field cardioblast proliferation"/>
    <property type="evidence" value="ECO:0007669"/>
    <property type="project" value="Ensembl"/>
</dbReference>
<dbReference type="GO" id="GO:0045944">
    <property type="term" value="P:positive regulation of transcription by RNA polymerase II"/>
    <property type="evidence" value="ECO:0000314"/>
    <property type="project" value="UniProtKB"/>
</dbReference>
<dbReference type="GO" id="GO:0072107">
    <property type="term" value="P:positive regulation of ureteric bud formation"/>
    <property type="evidence" value="ECO:0000250"/>
    <property type="project" value="UniProtKB"/>
</dbReference>
<dbReference type="GO" id="GO:0034504">
    <property type="term" value="P:protein localization to nucleus"/>
    <property type="evidence" value="ECO:0000314"/>
    <property type="project" value="UniProtKB"/>
</dbReference>
<dbReference type="GO" id="GO:0072095">
    <property type="term" value="P:regulation of branch elongation involved in ureteric bud branching"/>
    <property type="evidence" value="ECO:0000250"/>
    <property type="project" value="UniProtKB"/>
</dbReference>
<dbReference type="GO" id="GO:0006355">
    <property type="term" value="P:regulation of DNA-templated transcription"/>
    <property type="evidence" value="ECO:0000250"/>
    <property type="project" value="UniProtKB"/>
</dbReference>
<dbReference type="GO" id="GO:0050678">
    <property type="term" value="P:regulation of epithelial cell proliferation"/>
    <property type="evidence" value="ECO:0007669"/>
    <property type="project" value="Ensembl"/>
</dbReference>
<dbReference type="GO" id="GO:0045664">
    <property type="term" value="P:regulation of neuron differentiation"/>
    <property type="evidence" value="ECO:0000250"/>
    <property type="project" value="UniProtKB"/>
</dbReference>
<dbReference type="GO" id="GO:0032880">
    <property type="term" value="P:regulation of protein localization"/>
    <property type="evidence" value="ECO:0007669"/>
    <property type="project" value="Ensembl"/>
</dbReference>
<dbReference type="GO" id="GO:2001014">
    <property type="term" value="P:regulation of skeletal muscle cell differentiation"/>
    <property type="evidence" value="ECO:0007669"/>
    <property type="project" value="Ensembl"/>
</dbReference>
<dbReference type="GO" id="GO:0014857">
    <property type="term" value="P:regulation of skeletal muscle cell proliferation"/>
    <property type="evidence" value="ECO:0000318"/>
    <property type="project" value="GO_Central"/>
</dbReference>
<dbReference type="GO" id="GO:0014842">
    <property type="term" value="P:regulation of skeletal muscle satellite cell proliferation"/>
    <property type="evidence" value="ECO:0007669"/>
    <property type="project" value="Ensembl"/>
</dbReference>
<dbReference type="GO" id="GO:0008582">
    <property type="term" value="P:regulation of synaptic assembly at neuromuscular junction"/>
    <property type="evidence" value="ECO:0007669"/>
    <property type="project" value="Ensembl"/>
</dbReference>
<dbReference type="GO" id="GO:0006357">
    <property type="term" value="P:regulation of transcription by RNA polymerase II"/>
    <property type="evidence" value="ECO:0000318"/>
    <property type="project" value="GO_Central"/>
</dbReference>
<dbReference type="GO" id="GO:0007605">
    <property type="term" value="P:sensory perception of sound"/>
    <property type="evidence" value="ECO:0007669"/>
    <property type="project" value="Ensembl"/>
</dbReference>
<dbReference type="GO" id="GO:0048741">
    <property type="term" value="P:skeletal muscle fiber development"/>
    <property type="evidence" value="ECO:0000318"/>
    <property type="project" value="GO_Central"/>
</dbReference>
<dbReference type="GO" id="GO:0007519">
    <property type="term" value="P:skeletal muscle tissue development"/>
    <property type="evidence" value="ECO:0000250"/>
    <property type="project" value="UniProtKB"/>
</dbReference>
<dbReference type="GO" id="GO:0048538">
    <property type="term" value="P:thymus development"/>
    <property type="evidence" value="ECO:0000250"/>
    <property type="project" value="UniProtKB"/>
</dbReference>
<dbReference type="GO" id="GO:0030878">
    <property type="term" value="P:thyroid gland development"/>
    <property type="evidence" value="ECO:0000250"/>
    <property type="project" value="UniProtKB"/>
</dbReference>
<dbReference type="GO" id="GO:0061551">
    <property type="term" value="P:trigeminal ganglion development"/>
    <property type="evidence" value="ECO:0007669"/>
    <property type="project" value="Ensembl"/>
</dbReference>
<dbReference type="GO" id="GO:0072193">
    <property type="term" value="P:ureter smooth muscle cell differentiation"/>
    <property type="evidence" value="ECO:0007669"/>
    <property type="project" value="Ensembl"/>
</dbReference>
<dbReference type="GO" id="GO:0001657">
    <property type="term" value="P:ureteric bud development"/>
    <property type="evidence" value="ECO:0000250"/>
    <property type="project" value="UniProtKB"/>
</dbReference>
<dbReference type="CDD" id="cd00086">
    <property type="entry name" value="homeodomain"/>
    <property type="match status" value="1"/>
</dbReference>
<dbReference type="FunFam" id="1.10.10.60:FF:000063">
    <property type="entry name" value="SIX homeobox 2"/>
    <property type="match status" value="1"/>
</dbReference>
<dbReference type="Gene3D" id="1.10.10.60">
    <property type="entry name" value="Homeodomain-like"/>
    <property type="match status" value="1"/>
</dbReference>
<dbReference type="InterPro" id="IPR001356">
    <property type="entry name" value="HD"/>
</dbReference>
<dbReference type="InterPro" id="IPR017970">
    <property type="entry name" value="Homeobox_CS"/>
</dbReference>
<dbReference type="InterPro" id="IPR009057">
    <property type="entry name" value="Homeodomain-like_sf"/>
</dbReference>
<dbReference type="InterPro" id="IPR008422">
    <property type="entry name" value="KN_HD"/>
</dbReference>
<dbReference type="InterPro" id="IPR031701">
    <property type="entry name" value="SIX1_SD"/>
</dbReference>
<dbReference type="PANTHER" id="PTHR10390">
    <property type="entry name" value="HOMEOBOX PROTEIN SIX"/>
    <property type="match status" value="1"/>
</dbReference>
<dbReference type="PANTHER" id="PTHR10390:SF13">
    <property type="entry name" value="HOMEOBOX PROTEIN SIX1"/>
    <property type="match status" value="1"/>
</dbReference>
<dbReference type="Pfam" id="PF05920">
    <property type="entry name" value="Homeobox_KN"/>
    <property type="match status" value="1"/>
</dbReference>
<dbReference type="Pfam" id="PF16878">
    <property type="entry name" value="SIX1_SD"/>
    <property type="match status" value="1"/>
</dbReference>
<dbReference type="SMART" id="SM00389">
    <property type="entry name" value="HOX"/>
    <property type="match status" value="1"/>
</dbReference>
<dbReference type="SUPFAM" id="SSF46689">
    <property type="entry name" value="Homeodomain-like"/>
    <property type="match status" value="1"/>
</dbReference>
<dbReference type="PROSITE" id="PS00027">
    <property type="entry name" value="HOMEOBOX_1"/>
    <property type="match status" value="1"/>
</dbReference>
<dbReference type="PROSITE" id="PS50071">
    <property type="entry name" value="HOMEOBOX_2"/>
    <property type="match status" value="1"/>
</dbReference>